<protein>
    <recommendedName>
        <fullName>Protein SprT</fullName>
    </recommendedName>
</protein>
<sequence length="164" mass="19492">MHEQLNSRVETCYLQAETFFKRTFKRPVVSFQLRGQKAGVAHLHENLLRFNPQLYQENAEDFLRQTVPHEVAHLVAHQLFGGGIQPHGEEWQLIMRGVYELPPNRCHTYAVQRRSVIRYIYRCPCPDSDFPFTSQRHSMVRKGRRYLCRRCREPLMFSGETRTE</sequence>
<accession>Q885Z8</accession>
<dbReference type="EMBL" id="AE016853">
    <property type="protein sequence ID" value="AAO55203.1"/>
    <property type="molecule type" value="Genomic_DNA"/>
</dbReference>
<dbReference type="RefSeq" id="NP_791508.1">
    <property type="nucleotide sequence ID" value="NC_004578.1"/>
</dbReference>
<dbReference type="RefSeq" id="WP_005766637.1">
    <property type="nucleotide sequence ID" value="NC_004578.1"/>
</dbReference>
<dbReference type="STRING" id="223283.PSPTO_1683"/>
<dbReference type="GeneID" id="1183320"/>
<dbReference type="KEGG" id="pst:PSPTO_1683"/>
<dbReference type="PATRIC" id="fig|223283.9.peg.1709"/>
<dbReference type="eggNOG" id="COG3091">
    <property type="taxonomic scope" value="Bacteria"/>
</dbReference>
<dbReference type="HOGENOM" id="CLU_113336_0_1_6"/>
<dbReference type="OrthoDB" id="267364at2"/>
<dbReference type="PhylomeDB" id="Q885Z8"/>
<dbReference type="Proteomes" id="UP000002515">
    <property type="component" value="Chromosome"/>
</dbReference>
<dbReference type="GO" id="GO:0005737">
    <property type="term" value="C:cytoplasm"/>
    <property type="evidence" value="ECO:0007669"/>
    <property type="project" value="UniProtKB-SubCell"/>
</dbReference>
<dbReference type="GO" id="GO:0008270">
    <property type="term" value="F:zinc ion binding"/>
    <property type="evidence" value="ECO:0007669"/>
    <property type="project" value="UniProtKB-UniRule"/>
</dbReference>
<dbReference type="GO" id="GO:0006950">
    <property type="term" value="P:response to stress"/>
    <property type="evidence" value="ECO:0007669"/>
    <property type="project" value="UniProtKB-ARBA"/>
</dbReference>
<dbReference type="HAMAP" id="MF_00746">
    <property type="entry name" value="SprT"/>
    <property type="match status" value="1"/>
</dbReference>
<dbReference type="InterPro" id="IPR006640">
    <property type="entry name" value="SprT-like_domain"/>
</dbReference>
<dbReference type="InterPro" id="IPR023483">
    <property type="entry name" value="Uncharacterised_SprT"/>
</dbReference>
<dbReference type="NCBIfam" id="NF003421">
    <property type="entry name" value="PRK04860.1"/>
    <property type="match status" value="1"/>
</dbReference>
<dbReference type="PANTHER" id="PTHR38773">
    <property type="entry name" value="PROTEIN SPRT"/>
    <property type="match status" value="1"/>
</dbReference>
<dbReference type="PANTHER" id="PTHR38773:SF1">
    <property type="entry name" value="PROTEIN SPRT"/>
    <property type="match status" value="1"/>
</dbReference>
<dbReference type="Pfam" id="PF10263">
    <property type="entry name" value="SprT-like"/>
    <property type="match status" value="1"/>
</dbReference>
<dbReference type="SMART" id="SM00731">
    <property type="entry name" value="SprT"/>
    <property type="match status" value="1"/>
</dbReference>
<dbReference type="PROSITE" id="PS00142">
    <property type="entry name" value="ZINC_PROTEASE"/>
    <property type="match status" value="1"/>
</dbReference>
<evidence type="ECO:0000255" key="1"/>
<evidence type="ECO:0000305" key="2"/>
<gene>
    <name type="primary">sprT</name>
    <name type="ordered locus">PSPTO_1683</name>
</gene>
<proteinExistence type="inferred from homology"/>
<reference key="1">
    <citation type="journal article" date="2003" name="Proc. Natl. Acad. Sci. U.S.A.">
        <title>The complete genome sequence of the Arabidopsis and tomato pathogen Pseudomonas syringae pv. tomato DC3000.</title>
        <authorList>
            <person name="Buell C.R."/>
            <person name="Joardar V."/>
            <person name="Lindeberg M."/>
            <person name="Selengut J."/>
            <person name="Paulsen I.T."/>
            <person name="Gwinn M.L."/>
            <person name="Dodson R.J."/>
            <person name="DeBoy R.T."/>
            <person name="Durkin A.S."/>
            <person name="Kolonay J.F."/>
            <person name="Madupu R."/>
            <person name="Daugherty S.C."/>
            <person name="Brinkac L.M."/>
            <person name="Beanan M.J."/>
            <person name="Haft D.H."/>
            <person name="Nelson W.C."/>
            <person name="Davidsen T.M."/>
            <person name="Zafar N."/>
            <person name="Zhou L."/>
            <person name="Liu J."/>
            <person name="Yuan Q."/>
            <person name="Khouri H.M."/>
            <person name="Fedorova N.B."/>
            <person name="Tran B."/>
            <person name="Russell D."/>
            <person name="Berry K.J."/>
            <person name="Utterback T.R."/>
            <person name="Van Aken S.E."/>
            <person name="Feldblyum T.V."/>
            <person name="D'Ascenzo M."/>
            <person name="Deng W.-L."/>
            <person name="Ramos A.R."/>
            <person name="Alfano J.R."/>
            <person name="Cartinhour S."/>
            <person name="Chatterjee A.K."/>
            <person name="Delaney T.P."/>
            <person name="Lazarowitz S.G."/>
            <person name="Martin G.B."/>
            <person name="Schneider D.J."/>
            <person name="Tang X."/>
            <person name="Bender C.L."/>
            <person name="White O."/>
            <person name="Fraser C.M."/>
            <person name="Collmer A."/>
        </authorList>
    </citation>
    <scope>NUCLEOTIDE SEQUENCE [LARGE SCALE GENOMIC DNA]</scope>
    <source>
        <strain>ATCC BAA-871 / DC3000</strain>
    </source>
</reference>
<organism>
    <name type="scientific">Pseudomonas syringae pv. tomato (strain ATCC BAA-871 / DC3000)</name>
    <dbReference type="NCBI Taxonomy" id="223283"/>
    <lineage>
        <taxon>Bacteria</taxon>
        <taxon>Pseudomonadati</taxon>
        <taxon>Pseudomonadota</taxon>
        <taxon>Gammaproteobacteria</taxon>
        <taxon>Pseudomonadales</taxon>
        <taxon>Pseudomonadaceae</taxon>
        <taxon>Pseudomonas</taxon>
    </lineage>
</organism>
<feature type="chain" id="PRO_0000213275" description="Protein SprT">
    <location>
        <begin position="1"/>
        <end position="164"/>
    </location>
</feature>
<feature type="domain" description="SprT-like">
    <location>
        <begin position="17"/>
        <end position="155"/>
    </location>
</feature>
<feature type="active site" evidence="1">
    <location>
        <position position="70"/>
    </location>
</feature>
<feature type="binding site" evidence="1">
    <location>
        <position position="69"/>
    </location>
    <ligand>
        <name>Zn(2+)</name>
        <dbReference type="ChEBI" id="CHEBI:29105"/>
    </ligand>
</feature>
<feature type="binding site" evidence="1">
    <location>
        <position position="73"/>
    </location>
    <ligand>
        <name>Zn(2+)</name>
        <dbReference type="ChEBI" id="CHEBI:29105"/>
    </ligand>
</feature>
<keyword id="KW-0963">Cytoplasm</keyword>
<keyword id="KW-0479">Metal-binding</keyword>
<keyword id="KW-1185">Reference proteome</keyword>
<keyword id="KW-0862">Zinc</keyword>
<name>SPRT_PSESM</name>
<comment type="cofactor">
    <cofactor evidence="2">
        <name>Zn(2+)</name>
        <dbReference type="ChEBI" id="CHEBI:29105"/>
    </cofactor>
    <text evidence="2">Binds 1 zinc ion.</text>
</comment>
<comment type="subcellular location">
    <subcellularLocation>
        <location evidence="2">Cytoplasm</location>
    </subcellularLocation>
</comment>
<comment type="similarity">
    <text evidence="2">Belongs to the SprT family.</text>
</comment>